<reference evidence="12" key="1">
    <citation type="journal article" date="1998" name="Science">
        <title>Genome sequence of the nematode C. elegans: a platform for investigating biology.</title>
        <authorList>
            <consortium name="The C. elegans sequencing consortium"/>
        </authorList>
    </citation>
    <scope>NUCLEOTIDE SEQUENCE [LARGE SCALE GENOMIC DNA]</scope>
    <source>
        <strain evidence="12">Bristol N2</strain>
    </source>
</reference>
<reference evidence="11" key="2">
    <citation type="journal article" date="2004" name="Mol. Cell. Biol.">
        <title>Targeted gene knockout reveals a role in meiotic recombination for ZHP-3, a Zip3-related protein in Caenorhabditis elegans.</title>
        <authorList>
            <person name="Jantsch V."/>
            <person name="Pasierbek P."/>
            <person name="Mueller M.M."/>
            <person name="Schweizer D."/>
            <person name="Jantsch M."/>
            <person name="Loidl J."/>
        </authorList>
    </citation>
    <scope>FUNCTION</scope>
    <scope>SUBCELLULAR LOCATION</scope>
    <scope>TISSUE SPECIFICITY</scope>
    <scope>DISRUPTION PHENOTYPE</scope>
</reference>
<reference evidence="11" key="3">
    <citation type="journal article" date="2008" name="PLoS Genet.">
        <title>ZHP-3 acts at crossovers to couple meiotic recombination with synaptonemal complex disassembly and bivalent formation in C. elegans.</title>
        <authorList>
            <person name="Bhalla N."/>
            <person name="Wynne D.J."/>
            <person name="Jantsch V."/>
            <person name="Dernburg A.F."/>
        </authorList>
    </citation>
    <scope>FUNCTION</scope>
    <scope>SUBCELLULAR LOCATION</scope>
    <scope>TISSUE SPECIFICITY</scope>
    <scope>DISRUPTION PHENOTYPE</scope>
</reference>
<reference evidence="11" key="4">
    <citation type="journal article" date="2013" name="Cell Death Differ.">
        <title>Pro-crossover factors regulate damage-dependent apoptosis in the Caenorhabditis elegans germ line.</title>
        <authorList>
            <person name="Silva N."/>
            <person name="Adamo A."/>
            <person name="Santonicola P."/>
            <person name="Martinez-Perez E."/>
            <person name="La Volpe A."/>
        </authorList>
    </citation>
    <scope>FUNCTION</scope>
</reference>
<reference evidence="11" key="5">
    <citation type="journal article" date="2018" name="Elife">
        <title>A compartmentalized signaling network mediates crossover control in meiosis.</title>
        <authorList>
            <person name="Zhang L."/>
            <person name="Koehler S."/>
            <person name="Rillo-Bohn R."/>
            <person name="Dernburg A.F."/>
        </authorList>
    </citation>
    <scope>FUNCTION</scope>
    <scope>INTERACTION WITH ZHP-4</scope>
    <scope>SUBCELLULAR LOCATION</scope>
    <scope>TISSUE SPECIFICITY</scope>
</reference>
<reference evidence="11" key="6">
    <citation type="journal article" date="2018" name="PLoS Genet.">
        <title>BRCA1-BARD1 associate with the synaptonemal complex and pro-crossover factors and influence RAD-51 dynamics during Caenorhabditis elegans meiosis.</title>
        <authorList>
            <person name="Janisiw E."/>
            <person name="Dello Stritto M.R."/>
            <person name="Jantsch V."/>
            <person name="Silva N."/>
        </authorList>
    </citation>
    <scope>SUBCELLULAR LOCATION</scope>
</reference>
<reference evidence="11" key="7">
    <citation type="journal article" date="2018" name="PLoS Genet.">
        <title>C. elegans ZHP-4 is required at multiple distinct steps in the formation of crossovers and their transition to segregation competent chiasmata.</title>
        <authorList>
            <person name="Nguyen H."/>
            <person name="Labella S."/>
            <person name="Silva N."/>
            <person name="Jantsch V."/>
            <person name="Zetka M."/>
        </authorList>
    </citation>
    <scope>FUNCTION</scope>
    <scope>SUBCELLULAR LOCATION</scope>
    <scope>MUTAGENESIS OF HIS-25</scope>
</reference>
<organism evidence="12">
    <name type="scientific">Caenorhabditis elegans</name>
    <dbReference type="NCBI Taxonomy" id="6239"/>
    <lineage>
        <taxon>Eukaryota</taxon>
        <taxon>Metazoa</taxon>
        <taxon>Ecdysozoa</taxon>
        <taxon>Nematoda</taxon>
        <taxon>Chromadorea</taxon>
        <taxon>Rhabditida</taxon>
        <taxon>Rhabditina</taxon>
        <taxon>Rhabditomorpha</taxon>
        <taxon>Rhabditoidea</taxon>
        <taxon>Rhabditidae</taxon>
        <taxon>Peloderinae</taxon>
        <taxon>Caenorhabditis</taxon>
    </lineage>
</organism>
<feature type="chain" id="PRO_0000450697" description="Zip homologous protein 3">
    <location>
        <begin position="1"/>
        <end position="389"/>
    </location>
</feature>
<feature type="zinc finger region" description="RING-type" evidence="2">
    <location>
        <begin position="6"/>
        <end position="43"/>
    </location>
</feature>
<feature type="region of interest" description="Disordered" evidence="3">
    <location>
        <begin position="366"/>
        <end position="389"/>
    </location>
</feature>
<feature type="coiled-coil region" evidence="1">
    <location>
        <begin position="123"/>
        <end position="164"/>
    </location>
</feature>
<feature type="splice variant" id="VSP_060674" description="In isoform a." evidence="11">
    <location>
        <begin position="245"/>
        <end position="246"/>
    </location>
</feature>
<feature type="mutagenesis site" description="In vv137; 3% embryonic lethality and 3% of surviving progeny are male. Does not abolish zhp-4 recruitment to the synaptonemal complex between homologous chromosome pairs during pachytene. 95% embryonic lethality, 43% of surviving progeny are male and abolishes recruitment to chromosomes at any meiotic stage in a zhp-4 vv138 mutant background." evidence="8">
    <original>H</original>
    <variation>A</variation>
    <location>
        <position position="25"/>
    </location>
</feature>
<comment type="function">
    <text evidence="4 5 6 7 8">Recruited co-dependently with zhp-4 to the synaptonemal complex between homologous chromosome pairs to regulate the formation and number of crossover events between homologs during meiotic recombination (PubMed:15340062, PubMed:18949042, PubMed:29521627, PubMed:30379819). In the early stages of pachytene, in complex with zhp-4, recruited by the zhp-1-zhp-2 heterodimer to designated crossover sites along the homolog pair to stabilize other pro-crossover factors such as rmh-1, msh-5 and cosa-1 (PubMed:29521627, PubMed:30379819). This in turn facilitates crossover and promotes the formation of chiasma in each meiotic nucleus at the late pachytene stage of meiosis (PubMed:29521627, PubMed:30379819). Plays a role in the segregation of homologous chromosomes following the completion of crossovers (PubMed:18949042). Together with him-14 and msh-5 plays a role in the activation of DNA damage-dependent apoptosis at the DNA damage checkpoint in pachytene cells (PubMed:23832114).</text>
</comment>
<comment type="subunit">
    <text evidence="7">Interacts with zhp-4; the interaction is required for their localization along paired chromosomes and stability, and for the formation of chiasma during meiotic recombination.</text>
</comment>
<comment type="subcellular location">
    <subcellularLocation>
        <location evidence="4 5 7 8">Chromosome</location>
    </subcellularLocation>
    <text evidence="4 5 7 8 9">Co-localizes with zhp-4 to chromosomes from mitosis to early diakinesis in the germline (PubMed:29521627, PubMed:30379819). Co-localizes with syp-1, a component of the synaptonemal complex, throughout the gonad from early prophase to mid-pachytene (PubMed:15340062, PubMed:18949042, PubMed:29521627, PubMed:30379819). In early pachytene, co-localizes with syp-1 as puncta along chromosomes (PubMed:18949042). In pachytene nuclei, localizes in linear arrays in the space in between synapsed chromosomes (PubMed:15340062). Does not localize to unsynapsed chromosomes (PubMed:18949042). From mid-pachytene, co-localizes with cosa-1 at crossover sites of recombination intermediates, and gradually disassociates from syp-1 along both chromosome arms (PubMed:15340062, PubMed:18949042, PubMed:29521627, PubMed:30379819). Co-localizes with brc-1 at crossover sites in mid-late pachytene nuclei (PubMed:30383754). At late pachytene, localizes asymmetrically on synapsed chromosomes (PubMed:18949042). At late pachytene and early diplotene localizes to a single focus at the boundary between the long and short arm of each pair of homologous chromosomes (PubMed:18949042). At late pachytene, localization at chromosomes is not dependent on syp-1 (PubMed:18949042, PubMed:29521627). In diakinesis, does not localize to chromosomes, but is dispersed between chromosomes (PubMed:15340062).</text>
</comment>
<comment type="alternative products">
    <event type="alternative splicing"/>
    <isoform>
        <id>C6KRL6-1</id>
        <name evidence="14">b</name>
        <sequence type="displayed"/>
    </isoform>
    <isoform>
        <id>C6KRL6-2</id>
        <name evidence="13">a</name>
        <sequence type="described" ref="VSP_060674"/>
    </isoform>
</comment>
<comment type="tissue specificity">
    <text evidence="4 5 7">Expressed througout the gonad (at protein level) (PubMed:18949042). Expressed in the germline (PubMed:15340062, PubMed:29521627).</text>
</comment>
<comment type="disruption phenotype">
    <text evidence="4 5 7">High levels of embryonic lethality, but a small proportion of the surviving progeny develop beyond the L3 larval stage (PubMed:15340062, PubMed:18949042, PubMed:29521627). Of the surviving progeny, there is a high incidence of males (him phenotype) (PubMed:18949042, PubMed:29521627). Impaired meiotic recombination with no chiasma formation between homologous chromosome pairs at diplotene and diakinesis (PubMed:15340062). This is most likely due to an absence of crossover recombination (PubMed:15340062). Disrupted rad-51 localization during meiosis, whereby rad-51-positive foci are present in the gonad similarly to wild-type, however unlike in wild-type, they disappear before the end of pachytene (PubMed:15340062).</text>
</comment>
<dbReference type="EMBL" id="BX284601">
    <property type="protein sequence ID" value="CAB00037.3"/>
    <property type="molecule type" value="Genomic_DNA"/>
</dbReference>
<dbReference type="EMBL" id="BX284601">
    <property type="protein sequence ID" value="CAZ65508.1"/>
    <property type="molecule type" value="Genomic_DNA"/>
</dbReference>
<dbReference type="PIR" id="T23224">
    <property type="entry name" value="T23224"/>
</dbReference>
<dbReference type="RefSeq" id="NP_001250801.1">
    <molecule id="C6KRL6-2"/>
    <property type="nucleotide sequence ID" value="NM_001263872.3"/>
</dbReference>
<dbReference type="RefSeq" id="NP_001250802.1">
    <molecule id="C6KRL6-1"/>
    <property type="nucleotide sequence ID" value="NM_001263873.4"/>
</dbReference>
<dbReference type="SMR" id="C6KRL6"/>
<dbReference type="ComplexPortal" id="CPX-5802">
    <property type="entry name" value="ZHP-3-ZHP-4 meiotic pro-crossover complex"/>
</dbReference>
<dbReference type="FunCoup" id="C6KRL6">
    <property type="interactions" value="5"/>
</dbReference>
<dbReference type="IntAct" id="C6KRL6">
    <property type="interactions" value="1"/>
</dbReference>
<dbReference type="STRING" id="6239.K02B12.8b.1"/>
<dbReference type="PaxDb" id="6239-K02B12.8b"/>
<dbReference type="EnsemblMetazoa" id="K02B12.8a.1">
    <molecule id="C6KRL6-2"/>
    <property type="protein sequence ID" value="K02B12.8a.1"/>
    <property type="gene ID" value="WBGene00006976"/>
</dbReference>
<dbReference type="EnsemblMetazoa" id="K02B12.8b.1">
    <molecule id="C6KRL6-1"/>
    <property type="protein sequence ID" value="K02B12.8b.1"/>
    <property type="gene ID" value="WBGene00006976"/>
</dbReference>
<dbReference type="GeneID" id="172644"/>
<dbReference type="KEGG" id="cel:CELE_K02B12.8"/>
<dbReference type="UCSC" id="K02B12.8">
    <property type="organism name" value="c. elegans"/>
</dbReference>
<dbReference type="AGR" id="WB:WBGene00006976"/>
<dbReference type="CTD" id="172644"/>
<dbReference type="WormBase" id="K02B12.8a">
    <molecule id="C6KRL6-2"/>
    <property type="protein sequence ID" value="CE34201"/>
    <property type="gene ID" value="WBGene00006976"/>
    <property type="gene designation" value="zhp-3"/>
</dbReference>
<dbReference type="WormBase" id="K02B12.8b">
    <molecule id="C6KRL6-1"/>
    <property type="protein sequence ID" value="CE43850"/>
    <property type="gene ID" value="WBGene00006976"/>
    <property type="gene designation" value="zhp-3"/>
</dbReference>
<dbReference type="eggNOG" id="KOG4739">
    <property type="taxonomic scope" value="Eukaryota"/>
</dbReference>
<dbReference type="GeneTree" id="ENSGT00740000115581"/>
<dbReference type="HOGENOM" id="CLU_700632_0_0_1"/>
<dbReference type="InParanoid" id="C6KRL6"/>
<dbReference type="OMA" id="QTIMDKT"/>
<dbReference type="OrthoDB" id="5861230at2759"/>
<dbReference type="PRO" id="PR:C6KRL6"/>
<dbReference type="Proteomes" id="UP000001940">
    <property type="component" value="Chromosome I"/>
</dbReference>
<dbReference type="Bgee" id="WBGene00006976">
    <property type="expression patterns" value="Expressed in embryo and 3 other cell types or tissues"/>
</dbReference>
<dbReference type="ExpressionAtlas" id="C6KRL6">
    <property type="expression patterns" value="baseline and differential"/>
</dbReference>
<dbReference type="GO" id="GO:0005694">
    <property type="term" value="C:chromosome"/>
    <property type="evidence" value="ECO:0000303"/>
    <property type="project" value="ComplexPortal"/>
</dbReference>
<dbReference type="GO" id="GO:0000795">
    <property type="term" value="C:synaptonemal complex"/>
    <property type="evidence" value="ECO:0000314"/>
    <property type="project" value="WormBase"/>
</dbReference>
<dbReference type="GO" id="GO:0019789">
    <property type="term" value="F:SUMO transferase activity"/>
    <property type="evidence" value="ECO:0000266"/>
    <property type="project" value="WormBase"/>
</dbReference>
<dbReference type="GO" id="GO:0008270">
    <property type="term" value="F:zinc ion binding"/>
    <property type="evidence" value="ECO:0007669"/>
    <property type="project" value="UniProtKB-KW"/>
</dbReference>
<dbReference type="GO" id="GO:0051026">
    <property type="term" value="P:chiasma assembly"/>
    <property type="evidence" value="ECO:0000303"/>
    <property type="project" value="ComplexPortal"/>
</dbReference>
<dbReference type="GO" id="GO:0009792">
    <property type="term" value="P:embryo development ending in birth or egg hatching"/>
    <property type="evidence" value="ECO:0000315"/>
    <property type="project" value="WormBase"/>
</dbReference>
<dbReference type="GO" id="GO:0007129">
    <property type="term" value="P:homologous chromosome pairing at meiosis"/>
    <property type="evidence" value="ECO:0000318"/>
    <property type="project" value="GO_Central"/>
</dbReference>
<dbReference type="GO" id="GO:0045132">
    <property type="term" value="P:meiotic chromosome segregation"/>
    <property type="evidence" value="ECO:0000315"/>
    <property type="project" value="WormBase"/>
</dbReference>
<dbReference type="GO" id="GO:0007131">
    <property type="term" value="P:reciprocal meiotic recombination"/>
    <property type="evidence" value="ECO:0000303"/>
    <property type="project" value="ComplexPortal"/>
</dbReference>
<dbReference type="GO" id="GO:0070194">
    <property type="term" value="P:synaptonemal complex disassembly"/>
    <property type="evidence" value="ECO:0000315"/>
    <property type="project" value="WormBase"/>
</dbReference>
<dbReference type="CDD" id="cd16747">
    <property type="entry name" value="RING-HC_RNF212B"/>
    <property type="match status" value="1"/>
</dbReference>
<dbReference type="InterPro" id="IPR042123">
    <property type="entry name" value="Zip3/RNF212-like"/>
</dbReference>
<dbReference type="InterPro" id="IPR001841">
    <property type="entry name" value="Znf_RING"/>
</dbReference>
<dbReference type="InterPro" id="IPR017907">
    <property type="entry name" value="Znf_RING_CS"/>
</dbReference>
<dbReference type="PANTHER" id="PTHR22663">
    <property type="entry name" value="RING FINGER PROTEIN NARYA-RELATED"/>
    <property type="match status" value="1"/>
</dbReference>
<dbReference type="PANTHER" id="PTHR22663:SF28">
    <property type="entry name" value="ZIP HOMOLOGOUS PROTEIN 3"/>
    <property type="match status" value="1"/>
</dbReference>
<dbReference type="Pfam" id="PF14634">
    <property type="entry name" value="zf-RING_5"/>
    <property type="match status" value="1"/>
</dbReference>
<dbReference type="PROSITE" id="PS00518">
    <property type="entry name" value="ZF_RING_1"/>
    <property type="match status" value="1"/>
</dbReference>
<keyword id="KW-0025">Alternative splicing</keyword>
<keyword id="KW-0158">Chromosome</keyword>
<keyword id="KW-0175">Coiled coil</keyword>
<keyword id="KW-0233">DNA recombination</keyword>
<keyword id="KW-0469">Meiosis</keyword>
<keyword id="KW-0479">Metal-binding</keyword>
<keyword id="KW-1185">Reference proteome</keyword>
<keyword id="KW-0862">Zinc</keyword>
<keyword id="KW-0863">Zinc-finger</keyword>
<proteinExistence type="evidence at protein level"/>
<protein>
    <recommendedName>
        <fullName evidence="14">Zip homologous protein 3</fullName>
    </recommendedName>
    <alternativeName>
        <fullName evidence="10">Zip3-homologous protein</fullName>
    </alternativeName>
</protein>
<sequence>MDFVHCNKCFNRKPPDGFFISSCFHIFCTKCAKADLAVCLICKKNVRLVRLDGNISSGIKIYFADPIKMVADSLAKIQKKIDFQQSTRDHLVKYLTKEKEKKRQMEVYFRTKGQEFDSQRKKLAEATAWIQMAEKKLQASEEERVKAEREIEECQAKLKSMTNLMSADTLGMNSQTPFPFSLAESQETAPSLVESSANSTFNMVSPLVSSPASSPNSINYNSFFENGSRTRPESLNEEAMFNTMLQSSGQSANANTSESSAFSVAFNNIFTPSRNNMGDSSMINKTTANQTIMDKTSMSLENWRQNRANSFGVHDISKRDSSLPTGGGSAIRVHHFKQNSRITPIAQNRRSAAGFDRQQIQEMRRISSQPGYLAQRKPINGRSFIGPAD</sequence>
<accession>C6KRL6</accession>
<accession>P90905</accession>
<gene>
    <name evidence="14" type="primary">zhp-3</name>
    <name evidence="14" type="ORF">K02B12.8</name>
</gene>
<evidence type="ECO:0000255" key="1"/>
<evidence type="ECO:0000255" key="2">
    <source>
        <dbReference type="PROSITE-ProRule" id="PRU00175"/>
    </source>
</evidence>
<evidence type="ECO:0000256" key="3">
    <source>
        <dbReference type="SAM" id="MobiDB-lite"/>
    </source>
</evidence>
<evidence type="ECO:0000269" key="4">
    <source>
    </source>
</evidence>
<evidence type="ECO:0000269" key="5">
    <source>
    </source>
</evidence>
<evidence type="ECO:0000269" key="6">
    <source>
    </source>
</evidence>
<evidence type="ECO:0000269" key="7">
    <source>
    </source>
</evidence>
<evidence type="ECO:0000269" key="8">
    <source>
    </source>
</evidence>
<evidence type="ECO:0000269" key="9">
    <source>
    </source>
</evidence>
<evidence type="ECO:0000303" key="10">
    <source>
    </source>
</evidence>
<evidence type="ECO:0000305" key="11"/>
<evidence type="ECO:0000312" key="12">
    <source>
        <dbReference type="Proteomes" id="UP000001940"/>
    </source>
</evidence>
<evidence type="ECO:0000312" key="13">
    <source>
        <dbReference type="WormBase" id="K02B12.8a"/>
    </source>
</evidence>
<evidence type="ECO:0000312" key="14">
    <source>
        <dbReference type="WormBase" id="K02B12.8b"/>
    </source>
</evidence>
<name>ZHP3_CAEEL</name>